<keyword id="KW-0143">Chaperone</keyword>
<keyword id="KW-0963">Cytoplasm</keyword>
<keyword id="KW-0235">DNA replication</keyword>
<keyword id="KW-0479">Metal-binding</keyword>
<keyword id="KW-1185">Reference proteome</keyword>
<keyword id="KW-0677">Repeat</keyword>
<keyword id="KW-0346">Stress response</keyword>
<keyword id="KW-0862">Zinc</keyword>
<keyword id="KW-0863">Zinc-finger</keyword>
<comment type="function">
    <text evidence="1">Participates actively in the response to hyperosmotic and heat shock by preventing the aggregation of stress-denatured proteins and by disaggregating proteins, also in an autonomous, DnaK-independent fashion. Unfolded proteins bind initially to DnaJ; upon interaction with the DnaJ-bound protein, DnaK hydrolyzes its bound ATP, resulting in the formation of a stable complex. GrpE releases ADP from DnaK; ATP binding to DnaK triggers the release of the substrate protein, thus completing the reaction cycle. Several rounds of ATP-dependent interactions between DnaJ, DnaK and GrpE are required for fully efficient folding. Also involved, together with DnaK and GrpE, in the DNA replication of plasmids through activation of initiation proteins.</text>
</comment>
<comment type="cofactor">
    <cofactor evidence="1">
        <name>Zn(2+)</name>
        <dbReference type="ChEBI" id="CHEBI:29105"/>
    </cofactor>
    <text evidence="1">Binds 2 Zn(2+) ions per monomer.</text>
</comment>
<comment type="subunit">
    <text evidence="1">Homodimer.</text>
</comment>
<comment type="subcellular location">
    <subcellularLocation>
        <location evidence="1">Cytoplasm</location>
    </subcellularLocation>
</comment>
<comment type="domain">
    <text evidence="1">The J domain is necessary and sufficient to stimulate DnaK ATPase activity. Zinc center 1 plays an important role in the autonomous, DnaK-independent chaperone activity of DnaJ. Zinc center 2 is essential for interaction with DnaK and for DnaJ activity.</text>
</comment>
<comment type="similarity">
    <text evidence="1">Belongs to the DnaJ family.</text>
</comment>
<organism>
    <name type="scientific">Thermoplasma acidophilum (strain ATCC 25905 / DSM 1728 / JCM 9062 / NBRC 15155 / AMRC-C165)</name>
    <dbReference type="NCBI Taxonomy" id="273075"/>
    <lineage>
        <taxon>Archaea</taxon>
        <taxon>Methanobacteriati</taxon>
        <taxon>Thermoplasmatota</taxon>
        <taxon>Thermoplasmata</taxon>
        <taxon>Thermoplasmatales</taxon>
        <taxon>Thermoplasmataceae</taxon>
        <taxon>Thermoplasma</taxon>
    </lineage>
</organism>
<gene>
    <name evidence="1" type="primary">dnaJ</name>
    <name type="ordered locus">Ta1088</name>
</gene>
<name>DNAJ_THEAC</name>
<sequence length="365" mass="41584">MAKDYYKILGVDRNATDEEIKKAFRELAKKWHPDLHPENKQEAEEKFKEISEAYEVLSDPQKRRMYDQTGTVDFGAGGQNFNWDNFTHYSDLNDIFNDIFGGNFASDFFSGFGRGQREEQYDLDLYTNLDITLEDAYYGTEKRIKYRRNAMCPDCNGTGAKNGKLITCPTCNGTGQQRIVRGQGFFRMVTVTTCQTCGGRGRIPEEKCPRCNGTGTVVVNEDISVKIPKGATDNLRLRVQGKGQSYNGRTGDLYVVLRVRNDRNVQRINDDLMIDQKINFAQAALGDTIEVNLFREKYSLKIPEGTQPGEVLRIKGAGMPHLNGHGSGDLLVRVNVEVPKRLTQKQKDLIREIFDIKENHRSWFH</sequence>
<dbReference type="EMBL" id="AL445066">
    <property type="protein sequence ID" value="CAC12216.1"/>
    <property type="molecule type" value="Genomic_DNA"/>
</dbReference>
<dbReference type="RefSeq" id="WP_010901498.1">
    <property type="nucleotide sequence ID" value="NC_002578.1"/>
</dbReference>
<dbReference type="SMR" id="Q9HJ83"/>
<dbReference type="STRING" id="273075.gene:9572309"/>
<dbReference type="PaxDb" id="273075-Ta1088"/>
<dbReference type="EnsemblBacteria" id="CAC12216">
    <property type="protein sequence ID" value="CAC12216"/>
    <property type="gene ID" value="CAC12216"/>
</dbReference>
<dbReference type="KEGG" id="tac:Ta1088"/>
<dbReference type="eggNOG" id="arCOG02846">
    <property type="taxonomic scope" value="Archaea"/>
</dbReference>
<dbReference type="HOGENOM" id="CLU_017633_0_7_2"/>
<dbReference type="InParanoid" id="Q9HJ83"/>
<dbReference type="OrthoDB" id="8967at2157"/>
<dbReference type="Proteomes" id="UP000001024">
    <property type="component" value="Chromosome"/>
</dbReference>
<dbReference type="GO" id="GO:0005737">
    <property type="term" value="C:cytoplasm"/>
    <property type="evidence" value="ECO:0007669"/>
    <property type="project" value="UniProtKB-SubCell"/>
</dbReference>
<dbReference type="GO" id="GO:0005524">
    <property type="term" value="F:ATP binding"/>
    <property type="evidence" value="ECO:0007669"/>
    <property type="project" value="InterPro"/>
</dbReference>
<dbReference type="GO" id="GO:0031072">
    <property type="term" value="F:heat shock protein binding"/>
    <property type="evidence" value="ECO:0007669"/>
    <property type="project" value="InterPro"/>
</dbReference>
<dbReference type="GO" id="GO:0051082">
    <property type="term" value="F:unfolded protein binding"/>
    <property type="evidence" value="ECO:0007669"/>
    <property type="project" value="UniProtKB-UniRule"/>
</dbReference>
<dbReference type="GO" id="GO:0008270">
    <property type="term" value="F:zinc ion binding"/>
    <property type="evidence" value="ECO:0007669"/>
    <property type="project" value="UniProtKB-UniRule"/>
</dbReference>
<dbReference type="GO" id="GO:0051085">
    <property type="term" value="P:chaperone cofactor-dependent protein refolding"/>
    <property type="evidence" value="ECO:0007669"/>
    <property type="project" value="TreeGrafter"/>
</dbReference>
<dbReference type="GO" id="GO:0006260">
    <property type="term" value="P:DNA replication"/>
    <property type="evidence" value="ECO:0007669"/>
    <property type="project" value="UniProtKB-KW"/>
</dbReference>
<dbReference type="GO" id="GO:0042026">
    <property type="term" value="P:protein refolding"/>
    <property type="evidence" value="ECO:0007669"/>
    <property type="project" value="TreeGrafter"/>
</dbReference>
<dbReference type="GO" id="GO:0009408">
    <property type="term" value="P:response to heat"/>
    <property type="evidence" value="ECO:0007669"/>
    <property type="project" value="InterPro"/>
</dbReference>
<dbReference type="CDD" id="cd06257">
    <property type="entry name" value="DnaJ"/>
    <property type="match status" value="1"/>
</dbReference>
<dbReference type="CDD" id="cd10747">
    <property type="entry name" value="DnaJ_C"/>
    <property type="match status" value="1"/>
</dbReference>
<dbReference type="CDD" id="cd10719">
    <property type="entry name" value="DnaJ_zf"/>
    <property type="match status" value="1"/>
</dbReference>
<dbReference type="FunFam" id="1.10.287.110:FF:000034">
    <property type="entry name" value="Chaperone protein DnaJ"/>
    <property type="match status" value="1"/>
</dbReference>
<dbReference type="FunFam" id="2.60.260.20:FF:000005">
    <property type="entry name" value="Chaperone protein dnaJ 1, mitochondrial"/>
    <property type="match status" value="1"/>
</dbReference>
<dbReference type="FunFam" id="2.10.230.10:FF:000002">
    <property type="entry name" value="Molecular chaperone DnaJ"/>
    <property type="match status" value="1"/>
</dbReference>
<dbReference type="Gene3D" id="1.10.287.110">
    <property type="entry name" value="DnaJ domain"/>
    <property type="match status" value="1"/>
</dbReference>
<dbReference type="Gene3D" id="2.10.230.10">
    <property type="entry name" value="Heat shock protein DnaJ, cysteine-rich domain"/>
    <property type="match status" value="1"/>
</dbReference>
<dbReference type="Gene3D" id="2.60.260.20">
    <property type="entry name" value="Urease metallochaperone UreE, N-terminal domain"/>
    <property type="match status" value="2"/>
</dbReference>
<dbReference type="HAMAP" id="MF_01152">
    <property type="entry name" value="DnaJ"/>
    <property type="match status" value="1"/>
</dbReference>
<dbReference type="InterPro" id="IPR012724">
    <property type="entry name" value="DnaJ"/>
</dbReference>
<dbReference type="InterPro" id="IPR002939">
    <property type="entry name" value="DnaJ_C"/>
</dbReference>
<dbReference type="InterPro" id="IPR001623">
    <property type="entry name" value="DnaJ_domain"/>
</dbReference>
<dbReference type="InterPro" id="IPR018253">
    <property type="entry name" value="DnaJ_domain_CS"/>
</dbReference>
<dbReference type="InterPro" id="IPR008971">
    <property type="entry name" value="HSP40/DnaJ_pept-bd"/>
</dbReference>
<dbReference type="InterPro" id="IPR001305">
    <property type="entry name" value="HSP_DnaJ_Cys-rich_dom"/>
</dbReference>
<dbReference type="InterPro" id="IPR036410">
    <property type="entry name" value="HSP_DnaJ_Cys-rich_dom_sf"/>
</dbReference>
<dbReference type="InterPro" id="IPR036869">
    <property type="entry name" value="J_dom_sf"/>
</dbReference>
<dbReference type="NCBIfam" id="TIGR02349">
    <property type="entry name" value="DnaJ_bact"/>
    <property type="match status" value="1"/>
</dbReference>
<dbReference type="NCBIfam" id="NF008035">
    <property type="entry name" value="PRK10767.1"/>
    <property type="match status" value="1"/>
</dbReference>
<dbReference type="NCBIfam" id="NF010883">
    <property type="entry name" value="PRK14290.1"/>
    <property type="match status" value="1"/>
</dbReference>
<dbReference type="PANTHER" id="PTHR43096:SF48">
    <property type="entry name" value="CHAPERONE PROTEIN DNAJ"/>
    <property type="match status" value="1"/>
</dbReference>
<dbReference type="PANTHER" id="PTHR43096">
    <property type="entry name" value="DNAJ HOMOLOG 1, MITOCHONDRIAL-RELATED"/>
    <property type="match status" value="1"/>
</dbReference>
<dbReference type="Pfam" id="PF00226">
    <property type="entry name" value="DnaJ"/>
    <property type="match status" value="1"/>
</dbReference>
<dbReference type="Pfam" id="PF01556">
    <property type="entry name" value="DnaJ_C"/>
    <property type="match status" value="1"/>
</dbReference>
<dbReference type="Pfam" id="PF00684">
    <property type="entry name" value="DnaJ_CXXCXGXG"/>
    <property type="match status" value="1"/>
</dbReference>
<dbReference type="PRINTS" id="PR00625">
    <property type="entry name" value="JDOMAIN"/>
</dbReference>
<dbReference type="SMART" id="SM00271">
    <property type="entry name" value="DnaJ"/>
    <property type="match status" value="1"/>
</dbReference>
<dbReference type="SUPFAM" id="SSF46565">
    <property type="entry name" value="Chaperone J-domain"/>
    <property type="match status" value="1"/>
</dbReference>
<dbReference type="SUPFAM" id="SSF57938">
    <property type="entry name" value="DnaJ/Hsp40 cysteine-rich domain"/>
    <property type="match status" value="1"/>
</dbReference>
<dbReference type="SUPFAM" id="SSF49493">
    <property type="entry name" value="HSP40/DnaJ peptide-binding domain"/>
    <property type="match status" value="2"/>
</dbReference>
<dbReference type="PROSITE" id="PS00636">
    <property type="entry name" value="DNAJ_1"/>
    <property type="match status" value="1"/>
</dbReference>
<dbReference type="PROSITE" id="PS50076">
    <property type="entry name" value="DNAJ_2"/>
    <property type="match status" value="1"/>
</dbReference>
<dbReference type="PROSITE" id="PS51188">
    <property type="entry name" value="ZF_CR"/>
    <property type="match status" value="1"/>
</dbReference>
<accession>Q9HJ83</accession>
<proteinExistence type="inferred from homology"/>
<protein>
    <recommendedName>
        <fullName evidence="1">Chaperone protein DnaJ</fullName>
    </recommendedName>
</protein>
<feature type="chain" id="PRO_0000070953" description="Chaperone protein DnaJ">
    <location>
        <begin position="1"/>
        <end position="365"/>
    </location>
</feature>
<feature type="domain" description="J" evidence="1">
    <location>
        <begin position="4"/>
        <end position="70"/>
    </location>
</feature>
<feature type="repeat" description="CXXCXGXG motif">
    <location>
        <begin position="152"/>
        <end position="159"/>
    </location>
</feature>
<feature type="repeat" description="CXXCXGXG motif">
    <location>
        <begin position="168"/>
        <end position="175"/>
    </location>
</feature>
<feature type="repeat" description="CXXCXGXG motif">
    <location>
        <begin position="194"/>
        <end position="201"/>
    </location>
</feature>
<feature type="repeat" description="CXXCXGXG motif">
    <location>
        <begin position="208"/>
        <end position="215"/>
    </location>
</feature>
<feature type="zinc finger region" description="CR-type" evidence="1">
    <location>
        <begin position="139"/>
        <end position="220"/>
    </location>
</feature>
<feature type="binding site" evidence="1">
    <location>
        <position position="152"/>
    </location>
    <ligand>
        <name>Zn(2+)</name>
        <dbReference type="ChEBI" id="CHEBI:29105"/>
        <label>1</label>
    </ligand>
</feature>
<feature type="binding site" evidence="1">
    <location>
        <position position="155"/>
    </location>
    <ligand>
        <name>Zn(2+)</name>
        <dbReference type="ChEBI" id="CHEBI:29105"/>
        <label>1</label>
    </ligand>
</feature>
<feature type="binding site" evidence="1">
    <location>
        <position position="168"/>
    </location>
    <ligand>
        <name>Zn(2+)</name>
        <dbReference type="ChEBI" id="CHEBI:29105"/>
        <label>2</label>
    </ligand>
</feature>
<feature type="binding site" evidence="1">
    <location>
        <position position="171"/>
    </location>
    <ligand>
        <name>Zn(2+)</name>
        <dbReference type="ChEBI" id="CHEBI:29105"/>
        <label>2</label>
    </ligand>
</feature>
<feature type="binding site" evidence="1">
    <location>
        <position position="194"/>
    </location>
    <ligand>
        <name>Zn(2+)</name>
        <dbReference type="ChEBI" id="CHEBI:29105"/>
        <label>2</label>
    </ligand>
</feature>
<feature type="binding site" evidence="1">
    <location>
        <position position="197"/>
    </location>
    <ligand>
        <name>Zn(2+)</name>
        <dbReference type="ChEBI" id="CHEBI:29105"/>
        <label>2</label>
    </ligand>
</feature>
<feature type="binding site" evidence="1">
    <location>
        <position position="208"/>
    </location>
    <ligand>
        <name>Zn(2+)</name>
        <dbReference type="ChEBI" id="CHEBI:29105"/>
        <label>1</label>
    </ligand>
</feature>
<feature type="binding site" evidence="1">
    <location>
        <position position="211"/>
    </location>
    <ligand>
        <name>Zn(2+)</name>
        <dbReference type="ChEBI" id="CHEBI:29105"/>
        <label>1</label>
    </ligand>
</feature>
<reference key="1">
    <citation type="journal article" date="2000" name="Nature">
        <title>The genome sequence of the thermoacidophilic scavenger Thermoplasma acidophilum.</title>
        <authorList>
            <person name="Ruepp A."/>
            <person name="Graml W."/>
            <person name="Santos-Martinez M.-L."/>
            <person name="Koretke K.K."/>
            <person name="Volker C."/>
            <person name="Mewes H.-W."/>
            <person name="Frishman D."/>
            <person name="Stocker S."/>
            <person name="Lupas A.N."/>
            <person name="Baumeister W."/>
        </authorList>
    </citation>
    <scope>NUCLEOTIDE SEQUENCE [LARGE SCALE GENOMIC DNA]</scope>
    <source>
        <strain>ATCC 25905 / DSM 1728 / JCM 9062 / NBRC 15155 / AMRC-C165</strain>
    </source>
</reference>
<evidence type="ECO:0000255" key="1">
    <source>
        <dbReference type="HAMAP-Rule" id="MF_01152"/>
    </source>
</evidence>